<proteinExistence type="inferred from homology"/>
<gene>
    <name evidence="1" type="primary">dabA</name>
    <name type="ordered locus">SRU_2057</name>
</gene>
<accession>Q2S0W8</accession>
<name>DABA_SALRD</name>
<comment type="function">
    <text evidence="1">Part of an energy-coupled inorganic carbon pump.</text>
</comment>
<comment type="cofactor">
    <cofactor evidence="1">
        <name>Zn(2+)</name>
        <dbReference type="ChEBI" id="CHEBI:29105"/>
    </cofactor>
</comment>
<comment type="subunit">
    <text evidence="1">Forms a complex with DabB.</text>
</comment>
<comment type="subcellular location">
    <subcellularLocation>
        <location evidence="1">Cell inner membrane</location>
        <topology evidence="1">Peripheral membrane protein</topology>
    </subcellularLocation>
</comment>
<comment type="similarity">
    <text evidence="1">Belongs to the inorganic carbon transporter (TC 9.A.2) DabA family.</text>
</comment>
<sequence>MPIDRSVVRARIENAAEYVGPLWPLRTFNAANPLLGFEDQPFDRAVQKAGQLFGGRGYPGPTVFRQAWENGEIDADVLTRHLAEHGITERPEVLLDRMDADAAGRDAAPADQPLDRVLTKWLAAFLDQGQAAWPMPNREDGFYAAWRTVAPYDGDIPGVGRPSDLPGTVVEAFEAVLESYPEARWEPIFVHHLTALPGWTGFIKWRSRRADTAWQAAHPISLTEYLAVRLTLADRMGAAIAPDRTDELPANGTDQPVLPRIWLRAWEESYRTRLLDDLRQTQQTTPSGSDAGRPDAQLVFCIDTRSEVIRRHIEQQGPYETHGYAGFFGVPMQHQPYGTEERVKSCPPIVDPKHRIMERPAEPHRAQAERYDWWARLQKAGAALLKTLKKNVAAVFGFVEGSGGFFGAAMAARTLAPSGLSRLDEALDDWLPGPASFCEPTVDRAPPADADAEDGLPVGLADEAKVLYAEAAFRLMGWTDTFAPVVVFTGHGSQTPNNPYKASLDCGACAGNPGGPNARVLAAICNEDAVQEALRERGIAIPDDTVFLAGQHNTTTDEIALFVDEDDPPVAPDALDRLRRDLHAAQADAATERVRTLNTSVDEGRPAAAVRETERRAADWAETRPEWGLAGNAAFIVGPRALTRGLDLDGRCFLHSYDWATDDDGTALENIMTGPLVVGEWINTQYYFSTVDNAAYGSGSKVTQNVVGKLGVVQGNGGDLMSGLPLQSLKADDEHVHHRPLRLMALIQAPTDRVEAILDRHAAVAHLFDHEWMHLTVMDPEQDDAFVRYKPGGGWHARPAPDASTATKAPASAGVPS</sequence>
<dbReference type="EMBL" id="CP000159">
    <property type="protein sequence ID" value="ABC44819.1"/>
    <property type="molecule type" value="Genomic_DNA"/>
</dbReference>
<dbReference type="RefSeq" id="WP_011404785.1">
    <property type="nucleotide sequence ID" value="NC_007677.1"/>
</dbReference>
<dbReference type="RefSeq" id="YP_446163.1">
    <property type="nucleotide sequence ID" value="NC_007677.1"/>
</dbReference>
<dbReference type="STRING" id="309807.SRU_2057"/>
<dbReference type="EnsemblBacteria" id="ABC44819">
    <property type="protein sequence ID" value="ABC44819"/>
    <property type="gene ID" value="SRU_2057"/>
</dbReference>
<dbReference type="KEGG" id="sru:SRU_2057"/>
<dbReference type="PATRIC" id="fig|309807.25.peg.2138"/>
<dbReference type="eggNOG" id="COG3002">
    <property type="taxonomic scope" value="Bacteria"/>
</dbReference>
<dbReference type="HOGENOM" id="CLU_009885_0_0_10"/>
<dbReference type="OrthoDB" id="9805101at2"/>
<dbReference type="Proteomes" id="UP000008674">
    <property type="component" value="Chromosome"/>
</dbReference>
<dbReference type="GO" id="GO:0005886">
    <property type="term" value="C:plasma membrane"/>
    <property type="evidence" value="ECO:0007669"/>
    <property type="project" value="UniProtKB-SubCell"/>
</dbReference>
<dbReference type="GO" id="GO:0008270">
    <property type="term" value="F:zinc ion binding"/>
    <property type="evidence" value="ECO:0007669"/>
    <property type="project" value="UniProtKB-UniRule"/>
</dbReference>
<dbReference type="HAMAP" id="MF_01871">
    <property type="entry name" value="DabA"/>
    <property type="match status" value="1"/>
</dbReference>
<dbReference type="InterPro" id="IPR018752">
    <property type="entry name" value="DabA"/>
</dbReference>
<dbReference type="PANTHER" id="PTHR38344:SF1">
    <property type="entry name" value="INORGANIC CARBON TRANSPORTER SUBUNIT DABA-RELATED"/>
    <property type="match status" value="1"/>
</dbReference>
<dbReference type="PANTHER" id="PTHR38344">
    <property type="entry name" value="UPF0753 PROTEIN AQ_863"/>
    <property type="match status" value="1"/>
</dbReference>
<dbReference type="Pfam" id="PF10070">
    <property type="entry name" value="DabA"/>
    <property type="match status" value="1"/>
</dbReference>
<feature type="chain" id="PRO_0000387298" description="Probable inorganic carbon transporter subunit DabA">
    <location>
        <begin position="1"/>
        <end position="817"/>
    </location>
</feature>
<feature type="region of interest" description="Disordered" evidence="2">
    <location>
        <begin position="598"/>
        <end position="617"/>
    </location>
</feature>
<feature type="region of interest" description="Disordered" evidence="2">
    <location>
        <begin position="794"/>
        <end position="817"/>
    </location>
</feature>
<feature type="binding site" evidence="1">
    <location>
        <position position="301"/>
    </location>
    <ligand>
        <name>Zn(2+)</name>
        <dbReference type="ChEBI" id="CHEBI:29105"/>
    </ligand>
</feature>
<feature type="binding site" evidence="1">
    <location>
        <position position="303"/>
    </location>
    <ligand>
        <name>Zn(2+)</name>
        <dbReference type="ChEBI" id="CHEBI:29105"/>
    </ligand>
</feature>
<feature type="binding site" evidence="1">
    <location>
        <position position="491"/>
    </location>
    <ligand>
        <name>Zn(2+)</name>
        <dbReference type="ChEBI" id="CHEBI:29105"/>
    </ligand>
</feature>
<feature type="binding site" evidence="1">
    <location>
        <position position="506"/>
    </location>
    <ligand>
        <name>Zn(2+)</name>
        <dbReference type="ChEBI" id="CHEBI:29105"/>
    </ligand>
</feature>
<organism>
    <name type="scientific">Salinibacter ruber (strain DSM 13855 / M31)</name>
    <dbReference type="NCBI Taxonomy" id="309807"/>
    <lineage>
        <taxon>Bacteria</taxon>
        <taxon>Pseudomonadati</taxon>
        <taxon>Rhodothermota</taxon>
        <taxon>Rhodothermia</taxon>
        <taxon>Rhodothermales</taxon>
        <taxon>Salinibacteraceae</taxon>
        <taxon>Salinibacter</taxon>
    </lineage>
</organism>
<keyword id="KW-0997">Cell inner membrane</keyword>
<keyword id="KW-1003">Cell membrane</keyword>
<keyword id="KW-0472">Membrane</keyword>
<keyword id="KW-0479">Metal-binding</keyword>
<keyword id="KW-1185">Reference proteome</keyword>
<keyword id="KW-0813">Transport</keyword>
<keyword id="KW-0862">Zinc</keyword>
<protein>
    <recommendedName>
        <fullName evidence="1">Probable inorganic carbon transporter subunit DabA</fullName>
    </recommendedName>
</protein>
<evidence type="ECO:0000255" key="1">
    <source>
        <dbReference type="HAMAP-Rule" id="MF_01871"/>
    </source>
</evidence>
<evidence type="ECO:0000256" key="2">
    <source>
        <dbReference type="SAM" id="MobiDB-lite"/>
    </source>
</evidence>
<reference key="1">
    <citation type="journal article" date="2005" name="Proc. Natl. Acad. Sci. U.S.A.">
        <title>The genome of Salinibacter ruber: convergence and gene exchange among hyperhalophilic bacteria and archaea.</title>
        <authorList>
            <person name="Mongodin E.F."/>
            <person name="Nelson K.E."/>
            <person name="Daugherty S."/>
            <person name="DeBoy R.T."/>
            <person name="Wister J."/>
            <person name="Khouri H."/>
            <person name="Weidman J."/>
            <person name="Walsh D.A."/>
            <person name="Papke R.T."/>
            <person name="Sanchez Perez G."/>
            <person name="Sharma A.K."/>
            <person name="Nesbo C.L."/>
            <person name="MacLeod D."/>
            <person name="Bapteste E."/>
            <person name="Doolittle W.F."/>
            <person name="Charlebois R.L."/>
            <person name="Legault B."/>
            <person name="Rodriguez-Valera F."/>
        </authorList>
    </citation>
    <scope>NUCLEOTIDE SEQUENCE [LARGE SCALE GENOMIC DNA]</scope>
    <source>
        <strain>DSM 13855 / CECT 5946 / M31</strain>
    </source>
</reference>